<sequence>MKSIAVTGYKNFELGIFKKDADEAVYIKETIKRHLLPLVEDGLEWVIISGQLGIELWAGDVVAELKADYPIKLAILEPFEKQSANWNEANQLWASEVLEKADYHAFITKRPYESPAQFAARDGFIIDNTDGALLVYDLEKEGSPKFFYDRAIQAKEQSNYYIDCIDFYALQEVVEDMNQTF</sequence>
<comment type="similarity">
    <text evidence="1">Belongs to the UPF0398 family.</text>
</comment>
<feature type="chain" id="PRO_0000267166" description="UPF0398 protein LMOf2365_1918">
    <location>
        <begin position="1"/>
        <end position="181"/>
    </location>
</feature>
<gene>
    <name type="ordered locus">LMOf2365_1918</name>
</gene>
<name>Y1918_LISMF</name>
<evidence type="ECO:0000255" key="1">
    <source>
        <dbReference type="HAMAP-Rule" id="MF_01575"/>
    </source>
</evidence>
<protein>
    <recommendedName>
        <fullName evidence="1">UPF0398 protein LMOf2365_1918</fullName>
    </recommendedName>
</protein>
<reference key="1">
    <citation type="journal article" date="2004" name="Nucleic Acids Res.">
        <title>Whole genome comparisons of serotype 4b and 1/2a strains of the food-borne pathogen Listeria monocytogenes reveal new insights into the core genome components of this species.</title>
        <authorList>
            <person name="Nelson K.E."/>
            <person name="Fouts D.E."/>
            <person name="Mongodin E.F."/>
            <person name="Ravel J."/>
            <person name="DeBoy R.T."/>
            <person name="Kolonay J.F."/>
            <person name="Rasko D.A."/>
            <person name="Angiuoli S.V."/>
            <person name="Gill S.R."/>
            <person name="Paulsen I.T."/>
            <person name="Peterson J.D."/>
            <person name="White O."/>
            <person name="Nelson W.C."/>
            <person name="Nierman W.C."/>
            <person name="Beanan M.J."/>
            <person name="Brinkac L.M."/>
            <person name="Daugherty S.C."/>
            <person name="Dodson R.J."/>
            <person name="Durkin A.S."/>
            <person name="Madupu R."/>
            <person name="Haft D.H."/>
            <person name="Selengut J."/>
            <person name="Van Aken S.E."/>
            <person name="Khouri H.M."/>
            <person name="Fedorova N."/>
            <person name="Forberger H.A."/>
            <person name="Tran B."/>
            <person name="Kathariou S."/>
            <person name="Wonderling L.D."/>
            <person name="Uhlich G.A."/>
            <person name="Bayles D.O."/>
            <person name="Luchansky J.B."/>
            <person name="Fraser C.M."/>
        </authorList>
    </citation>
    <scope>NUCLEOTIDE SEQUENCE [LARGE SCALE GENOMIC DNA]</scope>
    <source>
        <strain>F2365</strain>
    </source>
</reference>
<proteinExistence type="inferred from homology"/>
<accession>Q71YC6</accession>
<organism>
    <name type="scientific">Listeria monocytogenes serotype 4b (strain F2365)</name>
    <dbReference type="NCBI Taxonomy" id="265669"/>
    <lineage>
        <taxon>Bacteria</taxon>
        <taxon>Bacillati</taxon>
        <taxon>Bacillota</taxon>
        <taxon>Bacilli</taxon>
        <taxon>Bacillales</taxon>
        <taxon>Listeriaceae</taxon>
        <taxon>Listeria</taxon>
    </lineage>
</organism>
<dbReference type="EMBL" id="AE017262">
    <property type="protein sequence ID" value="AAT04688.1"/>
    <property type="molecule type" value="Genomic_DNA"/>
</dbReference>
<dbReference type="RefSeq" id="WP_003726811.1">
    <property type="nucleotide sequence ID" value="NC_002973.6"/>
</dbReference>
<dbReference type="SMR" id="Q71YC6"/>
<dbReference type="KEGG" id="lmf:LMOf2365_1918"/>
<dbReference type="HOGENOM" id="CLU_105319_0_0_9"/>
<dbReference type="Gene3D" id="3.40.50.450">
    <property type="match status" value="1"/>
</dbReference>
<dbReference type="HAMAP" id="MF_01575">
    <property type="entry name" value="UPF0398"/>
    <property type="match status" value="1"/>
</dbReference>
<dbReference type="InterPro" id="IPR010697">
    <property type="entry name" value="YspA"/>
</dbReference>
<dbReference type="NCBIfam" id="NF010181">
    <property type="entry name" value="PRK13660.1"/>
    <property type="match status" value="1"/>
</dbReference>
<dbReference type="PANTHER" id="PTHR38440:SF1">
    <property type="entry name" value="UPF0398 PROTEIN SPR0331"/>
    <property type="match status" value="1"/>
</dbReference>
<dbReference type="PANTHER" id="PTHR38440">
    <property type="entry name" value="UPF0398 PROTEIN YPSA"/>
    <property type="match status" value="1"/>
</dbReference>
<dbReference type="Pfam" id="PF06908">
    <property type="entry name" value="YpsA"/>
    <property type="match status" value="1"/>
</dbReference>
<dbReference type="PIRSF" id="PIRSF021290">
    <property type="entry name" value="DUF1273"/>
    <property type="match status" value="1"/>
</dbReference>
<dbReference type="SUPFAM" id="SSF102405">
    <property type="entry name" value="MCP/YpsA-like"/>
    <property type="match status" value="1"/>
</dbReference>